<keyword id="KW-0002">3D-structure</keyword>
<keyword id="KW-0903">Direct protein sequencing</keyword>
<keyword id="KW-0414">Isoprene biosynthesis</keyword>
<keyword id="KW-0456">Lyase</keyword>
<keyword id="KW-0479">Metal-binding</keyword>
<keyword id="KW-1185">Reference proteome</keyword>
<organism>
    <name type="scientific">Escherichia coli (strain K12)</name>
    <dbReference type="NCBI Taxonomy" id="83333"/>
    <lineage>
        <taxon>Bacteria</taxon>
        <taxon>Pseudomonadati</taxon>
        <taxon>Pseudomonadota</taxon>
        <taxon>Gammaproteobacteria</taxon>
        <taxon>Enterobacterales</taxon>
        <taxon>Enterobacteriaceae</taxon>
        <taxon>Escherichia</taxon>
    </lineage>
</organism>
<feature type="chain" id="PRO_0000189464" description="2-C-methyl-D-erythritol 2,4-cyclodiphosphate synthase">
    <location>
        <begin position="1"/>
        <end position="159"/>
    </location>
</feature>
<feature type="binding site" evidence="4 5 7 8 9 15 18 20 21 24 26 28 29">
    <location>
        <begin position="8"/>
        <end position="10"/>
    </location>
    <ligand>
        <name>4-CDP-2-C-methyl-D-erythritol 2-phosphate</name>
        <dbReference type="ChEBI" id="CHEBI:57919"/>
    </ligand>
</feature>
<feature type="binding site" evidence="3 4 5 7 8 9 10 18 19 20 21 24 25 26 28 29 30 31 32 33 34 35">
    <location>
        <position position="8"/>
    </location>
    <ligand>
        <name>a divalent metal cation</name>
        <dbReference type="ChEBI" id="CHEBI:60240"/>
    </ligand>
</feature>
<feature type="binding site" evidence="3 4 5 7 8 9 10 18 19 20 21 24 25 26 28 29 30 31 32 33 34 35">
    <location>
        <position position="10"/>
    </location>
    <ligand>
        <name>a divalent metal cation</name>
        <dbReference type="ChEBI" id="CHEBI:60240"/>
    </ligand>
</feature>
<feature type="binding site" evidence="3 4 7 8 20 22 27 29">
    <location>
        <begin position="34"/>
        <end position="35"/>
    </location>
    <ligand>
        <name>4-CDP-2-C-methyl-D-erythritol 2-phosphate</name>
        <dbReference type="ChEBI" id="CHEBI:57919"/>
    </ligand>
</feature>
<feature type="binding site" evidence="3 4 5 7 8 9 10 18 19 20 21 24 25 26 28 29 30 31 32 33 34 35">
    <location>
        <position position="42"/>
    </location>
    <ligand>
        <name>a divalent metal cation</name>
        <dbReference type="ChEBI" id="CHEBI:60240"/>
    </ligand>
</feature>
<feature type="binding site" evidence="4 5 7 8 9 10 16 18 20 24 25 28 29 30 33">
    <location>
        <begin position="56"/>
        <end position="58"/>
    </location>
    <ligand>
        <name>4-CDP-2-C-methyl-D-erythritol 2-phosphate</name>
        <dbReference type="ChEBI" id="CHEBI:57919"/>
    </ligand>
</feature>
<feature type="binding site" evidence="4 7 14 20 25 26">
    <location>
        <begin position="61"/>
        <end position="65"/>
    </location>
    <ligand>
        <name>4-CDP-2-C-methyl-D-erythritol 2-phosphate</name>
        <dbReference type="ChEBI" id="CHEBI:57919"/>
    </ligand>
</feature>
<feature type="binding site" evidence="3 5 7 8 10 18 20 22 24 28 29 31 32 33 34 35">
    <location>
        <begin position="100"/>
        <end position="106"/>
    </location>
    <ligand>
        <name>4-CDP-2-C-methyl-D-erythritol 2-phosphate</name>
        <dbReference type="ChEBI" id="CHEBI:57919"/>
    </ligand>
</feature>
<feature type="binding site" evidence="5 7 8 10 18 20 24 28 29 33">
    <location>
        <begin position="132"/>
        <end position="135"/>
    </location>
    <ligand>
        <name>4-CDP-2-C-methyl-D-erythritol 2-phosphate</name>
        <dbReference type="ChEBI" id="CHEBI:57919"/>
    </ligand>
</feature>
<feature type="binding site" evidence="7 8 9 10 20 28 29 31 33">
    <location>
        <position position="139"/>
    </location>
    <ligand>
        <name>4-CDP-2-C-methyl-D-erythritol 2-phosphate</name>
        <dbReference type="ChEBI" id="CHEBI:57919"/>
    </ligand>
</feature>
<feature type="binding site" evidence="7 8 10 17 20 29 30 32 33 34 35">
    <location>
        <position position="142"/>
    </location>
    <ligand>
        <name>4-CDP-2-C-methyl-D-erythritol 2-phosphate</name>
        <dbReference type="ChEBI" id="CHEBI:57919"/>
    </ligand>
</feature>
<feature type="site" description="Transition state stabilizer" evidence="1 13">
    <location>
        <position position="34"/>
    </location>
</feature>
<feature type="site" description="Transition state stabilizer" evidence="1 13">
    <location>
        <position position="133"/>
    </location>
</feature>
<feature type="mutagenesis site" description="Loss of activity." evidence="4">
    <original>D</original>
    <variation>S</variation>
    <location>
        <position position="8"/>
    </location>
</feature>
<feature type="mutagenesis site" description="Loss of activity." evidence="4">
    <original>H</original>
    <variation>S</variation>
    <location>
        <position position="42"/>
    </location>
</feature>
<feature type="mutagenesis site" description="35% decrease of activity." evidence="4">
    <original>D</original>
    <variation>S</variation>
    <location>
        <position position="56"/>
    </location>
</feature>
<feature type="mutagenesis site" description="Little effect on the overall structure; when associated with L-144." evidence="9">
    <original>R</original>
    <variation>M</variation>
    <location>
        <position position="142"/>
    </location>
</feature>
<feature type="mutagenesis site" description="Little effect on the overall structure; when associated with M-142." evidence="9">
    <original>E</original>
    <variation>L</variation>
    <location>
        <position position="144"/>
    </location>
</feature>
<feature type="strand" evidence="36">
    <location>
        <begin position="1"/>
        <end position="16"/>
    </location>
</feature>
<feature type="strand" evidence="36">
    <location>
        <begin position="18"/>
        <end position="20"/>
    </location>
</feature>
<feature type="strand" evidence="36">
    <location>
        <begin position="23"/>
        <end position="25"/>
    </location>
</feature>
<feature type="strand" evidence="36">
    <location>
        <begin position="28"/>
        <end position="31"/>
    </location>
</feature>
<feature type="strand" evidence="36">
    <location>
        <begin position="33"/>
        <end position="35"/>
    </location>
</feature>
<feature type="helix" evidence="36">
    <location>
        <begin position="39"/>
        <end position="51"/>
    </location>
</feature>
<feature type="helix" evidence="36">
    <location>
        <begin position="57"/>
        <end position="60"/>
    </location>
</feature>
<feature type="strand" evidence="37">
    <location>
        <begin position="63"/>
        <end position="65"/>
    </location>
</feature>
<feature type="helix" evidence="36">
    <location>
        <begin position="66"/>
        <end position="68"/>
    </location>
</feature>
<feature type="strand" evidence="38">
    <location>
        <begin position="69"/>
        <end position="71"/>
    </location>
</feature>
<feature type="helix" evidence="36">
    <location>
        <begin position="73"/>
        <end position="86"/>
    </location>
</feature>
<feature type="strand" evidence="36">
    <location>
        <begin position="90"/>
        <end position="99"/>
    </location>
</feature>
<feature type="strand" evidence="36">
    <location>
        <begin position="101"/>
        <end position="103"/>
    </location>
</feature>
<feature type="helix" evidence="36">
    <location>
        <begin position="106"/>
        <end position="108"/>
    </location>
</feature>
<feature type="helix" evidence="36">
    <location>
        <begin position="109"/>
        <end position="119"/>
    </location>
</feature>
<feature type="helix" evidence="36">
    <location>
        <begin position="124"/>
        <end position="126"/>
    </location>
</feature>
<feature type="strand" evidence="36">
    <location>
        <begin position="127"/>
        <end position="132"/>
    </location>
</feature>
<feature type="helix" evidence="36">
    <location>
        <begin position="138"/>
        <end position="141"/>
    </location>
</feature>
<feature type="strand" evidence="36">
    <location>
        <begin position="144"/>
        <end position="155"/>
    </location>
</feature>
<dbReference type="EC" id="4.6.1.12" evidence="1 2 11"/>
<dbReference type="EMBL" id="L07942">
    <property type="protein sequence ID" value="AAA79837.1"/>
    <property type="molecule type" value="Genomic_DNA"/>
</dbReference>
<dbReference type="EMBL" id="AF230738">
    <property type="protein sequence ID" value="AAF44656.1"/>
    <property type="molecule type" value="Genomic_DNA"/>
</dbReference>
<dbReference type="EMBL" id="AB038256">
    <property type="protein sequence ID" value="BAA95145.1"/>
    <property type="molecule type" value="Genomic_DNA"/>
</dbReference>
<dbReference type="EMBL" id="U29579">
    <property type="protein sequence ID" value="AAA69256.1"/>
    <property type="molecule type" value="Genomic_DNA"/>
</dbReference>
<dbReference type="EMBL" id="U00096">
    <property type="protein sequence ID" value="AAC75788.1"/>
    <property type="molecule type" value="Genomic_DNA"/>
</dbReference>
<dbReference type="EMBL" id="AP009048">
    <property type="protein sequence ID" value="BAE76823.1"/>
    <property type="molecule type" value="Genomic_DNA"/>
</dbReference>
<dbReference type="PIR" id="I55083">
    <property type="entry name" value="I55083"/>
</dbReference>
<dbReference type="RefSeq" id="NP_417226.1">
    <property type="nucleotide sequence ID" value="NC_000913.3"/>
</dbReference>
<dbReference type="RefSeq" id="WP_001219242.1">
    <property type="nucleotide sequence ID" value="NZ_SSUR01000024.1"/>
</dbReference>
<dbReference type="PDB" id="1GX1">
    <property type="method" value="X-ray"/>
    <property type="resolution" value="1.80 A"/>
    <property type="chains" value="A/B/C=1-159"/>
</dbReference>
<dbReference type="PDB" id="1H47">
    <property type="method" value="X-ray"/>
    <property type="resolution" value="2.00 A"/>
    <property type="chains" value="A/B/C/D/E/F=1-159"/>
</dbReference>
<dbReference type="PDB" id="1H48">
    <property type="method" value="X-ray"/>
    <property type="resolution" value="2.30 A"/>
    <property type="chains" value="A/B/C/D/E/F=1-159"/>
</dbReference>
<dbReference type="PDB" id="1JY8">
    <property type="method" value="X-ray"/>
    <property type="resolution" value="2.50 A"/>
    <property type="chains" value="A=1-159"/>
</dbReference>
<dbReference type="PDB" id="1KNJ">
    <property type="method" value="X-ray"/>
    <property type="resolution" value="2.80 A"/>
    <property type="chains" value="A=1-159"/>
</dbReference>
<dbReference type="PDB" id="1KNK">
    <property type="method" value="X-ray"/>
    <property type="resolution" value="2.80 A"/>
    <property type="chains" value="A=1-159"/>
</dbReference>
<dbReference type="PDB" id="1U3L">
    <property type="method" value="X-ray"/>
    <property type="resolution" value="2.50 A"/>
    <property type="chains" value="A=1-159"/>
</dbReference>
<dbReference type="PDB" id="1U3P">
    <property type="method" value="X-ray"/>
    <property type="resolution" value="2.85 A"/>
    <property type="chains" value="A=1-159"/>
</dbReference>
<dbReference type="PDB" id="1U40">
    <property type="method" value="X-ray"/>
    <property type="resolution" value="2.80 A"/>
    <property type="chains" value="A=1-159"/>
</dbReference>
<dbReference type="PDB" id="1U43">
    <property type="method" value="X-ray"/>
    <property type="resolution" value="3.20 A"/>
    <property type="chains" value="A=1-159"/>
</dbReference>
<dbReference type="PDB" id="1YQN">
    <property type="method" value="X-ray"/>
    <property type="resolution" value="3.11 A"/>
    <property type="chains" value="A=1-159"/>
</dbReference>
<dbReference type="PDB" id="2AMT">
    <property type="method" value="X-ray"/>
    <property type="resolution" value="2.30 A"/>
    <property type="chains" value="A/B/C/D/E/F=1-159"/>
</dbReference>
<dbReference type="PDB" id="2GZL">
    <property type="method" value="X-ray"/>
    <property type="resolution" value="2.50 A"/>
    <property type="chains" value="A=1-157"/>
</dbReference>
<dbReference type="PDB" id="3ELC">
    <property type="method" value="X-ray"/>
    <property type="resolution" value="2.50 A"/>
    <property type="chains" value="A/B/C=1-159"/>
</dbReference>
<dbReference type="PDB" id="3EOR">
    <property type="method" value="X-ray"/>
    <property type="resolution" value="2.90 A"/>
    <property type="chains" value="A=1-159"/>
</dbReference>
<dbReference type="PDB" id="3ERN">
    <property type="method" value="X-ray"/>
    <property type="resolution" value="2.10 A"/>
    <property type="chains" value="A/B/C/D/E/F=1-159"/>
</dbReference>
<dbReference type="PDB" id="3ESJ">
    <property type="method" value="X-ray"/>
    <property type="resolution" value="2.70 A"/>
    <property type="chains" value="A=1-159"/>
</dbReference>
<dbReference type="PDB" id="3FBA">
    <property type="method" value="X-ray"/>
    <property type="resolution" value="3.10 A"/>
    <property type="chains" value="A=1-159"/>
</dbReference>
<dbReference type="PDBsum" id="1GX1"/>
<dbReference type="PDBsum" id="1H47"/>
<dbReference type="PDBsum" id="1H48"/>
<dbReference type="PDBsum" id="1JY8"/>
<dbReference type="PDBsum" id="1KNJ"/>
<dbReference type="PDBsum" id="1KNK"/>
<dbReference type="PDBsum" id="1U3L"/>
<dbReference type="PDBsum" id="1U3P"/>
<dbReference type="PDBsum" id="1U40"/>
<dbReference type="PDBsum" id="1U43"/>
<dbReference type="PDBsum" id="1YQN"/>
<dbReference type="PDBsum" id="2AMT"/>
<dbReference type="PDBsum" id="2GZL"/>
<dbReference type="PDBsum" id="3ELC"/>
<dbReference type="PDBsum" id="3EOR"/>
<dbReference type="PDBsum" id="3ERN"/>
<dbReference type="PDBsum" id="3ESJ"/>
<dbReference type="PDBsum" id="3FBA"/>
<dbReference type="SMR" id="P62617"/>
<dbReference type="BioGRID" id="4262279">
    <property type="interactions" value="283"/>
</dbReference>
<dbReference type="DIP" id="DIP-48029N"/>
<dbReference type="FunCoup" id="P62617">
    <property type="interactions" value="490"/>
</dbReference>
<dbReference type="IntAct" id="P62617">
    <property type="interactions" value="7"/>
</dbReference>
<dbReference type="STRING" id="511145.b2746"/>
<dbReference type="BindingDB" id="P62617"/>
<dbReference type="ChEMBL" id="CHEMBL3217375"/>
<dbReference type="DrugBank" id="DB02552">
    <property type="generic name" value="Geranyl Diphosphate"/>
</dbReference>
<dbReference type="jPOST" id="P62617"/>
<dbReference type="PaxDb" id="511145-b2746"/>
<dbReference type="EnsemblBacteria" id="AAC75788">
    <property type="protein sequence ID" value="AAC75788"/>
    <property type="gene ID" value="b2746"/>
</dbReference>
<dbReference type="GeneID" id="93779260"/>
<dbReference type="GeneID" id="945057"/>
<dbReference type="KEGG" id="ecj:JW2716"/>
<dbReference type="KEGG" id="eco:b2746"/>
<dbReference type="KEGG" id="ecoc:C3026_15100"/>
<dbReference type="PATRIC" id="fig|1411691.4.peg.3994"/>
<dbReference type="EchoBASE" id="EB1763"/>
<dbReference type="eggNOG" id="COG0245">
    <property type="taxonomic scope" value="Bacteria"/>
</dbReference>
<dbReference type="HOGENOM" id="CLU_084630_2_0_6"/>
<dbReference type="InParanoid" id="P62617"/>
<dbReference type="OMA" id="LIHAIMD"/>
<dbReference type="OrthoDB" id="9804336at2"/>
<dbReference type="PhylomeDB" id="P62617"/>
<dbReference type="BioCyc" id="EcoCyc:EG11816-MONOMER"/>
<dbReference type="BioCyc" id="MetaCyc:EG11816-MONOMER"/>
<dbReference type="BRENDA" id="4.6.1.12">
    <property type="organism ID" value="2026"/>
</dbReference>
<dbReference type="SABIO-RK" id="P62617"/>
<dbReference type="UniPathway" id="UPA00056">
    <property type="reaction ID" value="UER00095"/>
</dbReference>
<dbReference type="EvolutionaryTrace" id="P62617"/>
<dbReference type="PRO" id="PR:P62617"/>
<dbReference type="Proteomes" id="UP000000625">
    <property type="component" value="Chromosome"/>
</dbReference>
<dbReference type="GO" id="GO:0008685">
    <property type="term" value="F:2-C-methyl-D-erythritol 2,4-cyclodiphosphate synthase activity"/>
    <property type="evidence" value="ECO:0000314"/>
    <property type="project" value="EcoCyc"/>
</dbReference>
<dbReference type="GO" id="GO:0042802">
    <property type="term" value="F:identical protein binding"/>
    <property type="evidence" value="ECO:0000314"/>
    <property type="project" value="EcoCyc"/>
</dbReference>
<dbReference type="GO" id="GO:0030145">
    <property type="term" value="F:manganese ion binding"/>
    <property type="evidence" value="ECO:0000314"/>
    <property type="project" value="EcoCyc"/>
</dbReference>
<dbReference type="GO" id="GO:0046872">
    <property type="term" value="F:metal ion binding"/>
    <property type="evidence" value="ECO:0000314"/>
    <property type="project" value="EcoCyc"/>
</dbReference>
<dbReference type="GO" id="GO:0008270">
    <property type="term" value="F:zinc ion binding"/>
    <property type="evidence" value="ECO:0000314"/>
    <property type="project" value="EcoCyc"/>
</dbReference>
<dbReference type="GO" id="GO:0019288">
    <property type="term" value="P:isopentenyl diphosphate biosynthetic process, methylerythritol 4-phosphate pathway"/>
    <property type="evidence" value="ECO:0007669"/>
    <property type="project" value="UniProtKB-UniRule"/>
</dbReference>
<dbReference type="GO" id="GO:0016114">
    <property type="term" value="P:terpenoid biosynthetic process"/>
    <property type="evidence" value="ECO:0007669"/>
    <property type="project" value="InterPro"/>
</dbReference>
<dbReference type="GO" id="GO:0006744">
    <property type="term" value="P:ubiquinone biosynthetic process"/>
    <property type="evidence" value="ECO:0000314"/>
    <property type="project" value="EcoCyc"/>
</dbReference>
<dbReference type="CDD" id="cd00554">
    <property type="entry name" value="MECDP_synthase"/>
    <property type="match status" value="1"/>
</dbReference>
<dbReference type="FunFam" id="3.30.1330.50:FF:000001">
    <property type="entry name" value="2-C-methyl-D-erythritol 2,4-cyclodiphosphate synthase"/>
    <property type="match status" value="1"/>
</dbReference>
<dbReference type="Gene3D" id="3.30.1330.50">
    <property type="entry name" value="2-C-methyl-D-erythritol 2,4-cyclodiphosphate synthase"/>
    <property type="match status" value="1"/>
</dbReference>
<dbReference type="HAMAP" id="MF_00107">
    <property type="entry name" value="IspF"/>
    <property type="match status" value="1"/>
</dbReference>
<dbReference type="InterPro" id="IPR003526">
    <property type="entry name" value="MECDP_synthase"/>
</dbReference>
<dbReference type="InterPro" id="IPR020555">
    <property type="entry name" value="MECDP_synthase_CS"/>
</dbReference>
<dbReference type="InterPro" id="IPR036571">
    <property type="entry name" value="MECDP_synthase_sf"/>
</dbReference>
<dbReference type="NCBIfam" id="TIGR00151">
    <property type="entry name" value="ispF"/>
    <property type="match status" value="1"/>
</dbReference>
<dbReference type="PANTHER" id="PTHR43181">
    <property type="entry name" value="2-C-METHYL-D-ERYTHRITOL 2,4-CYCLODIPHOSPHATE SYNTHASE, CHLOROPLASTIC"/>
    <property type="match status" value="1"/>
</dbReference>
<dbReference type="PANTHER" id="PTHR43181:SF1">
    <property type="entry name" value="2-C-METHYL-D-ERYTHRITOL 2,4-CYCLODIPHOSPHATE SYNTHASE, CHLOROPLASTIC"/>
    <property type="match status" value="1"/>
</dbReference>
<dbReference type="Pfam" id="PF02542">
    <property type="entry name" value="YgbB"/>
    <property type="match status" value="1"/>
</dbReference>
<dbReference type="SUPFAM" id="SSF69765">
    <property type="entry name" value="IpsF-like"/>
    <property type="match status" value="1"/>
</dbReference>
<dbReference type="PROSITE" id="PS01350">
    <property type="entry name" value="ISPF"/>
    <property type="match status" value="1"/>
</dbReference>
<evidence type="ECO:0000255" key="1">
    <source>
        <dbReference type="HAMAP-Rule" id="MF_00107"/>
    </source>
</evidence>
<evidence type="ECO:0000269" key="2">
    <source>
    </source>
</evidence>
<evidence type="ECO:0000269" key="3">
    <source>
    </source>
</evidence>
<evidence type="ECO:0000269" key="4">
    <source>
    </source>
</evidence>
<evidence type="ECO:0000269" key="5">
    <source>
    </source>
</evidence>
<evidence type="ECO:0000269" key="6">
    <source>
    </source>
</evidence>
<evidence type="ECO:0000269" key="7">
    <source>
    </source>
</evidence>
<evidence type="ECO:0000269" key="8">
    <source>
    </source>
</evidence>
<evidence type="ECO:0000269" key="9">
    <source>
    </source>
</evidence>
<evidence type="ECO:0000269" key="10">
    <source>
    </source>
</evidence>
<evidence type="ECO:0000269" key="11">
    <source>
    </source>
</evidence>
<evidence type="ECO:0000305" key="12"/>
<evidence type="ECO:0000305" key="13">
    <source>
    </source>
</evidence>
<evidence type="ECO:0000312" key="14">
    <source>
        <dbReference type="PDB" id="1JY8"/>
    </source>
</evidence>
<evidence type="ECO:0000312" key="15">
    <source>
        <dbReference type="PDB" id="1U3P"/>
    </source>
</evidence>
<evidence type="ECO:0000312" key="16">
    <source>
        <dbReference type="PDB" id="1U43"/>
    </source>
</evidence>
<evidence type="ECO:0000312" key="17">
    <source>
        <dbReference type="PDB" id="3ELC"/>
    </source>
</evidence>
<evidence type="ECO:0007744" key="18">
    <source>
        <dbReference type="PDB" id="1GX1"/>
    </source>
</evidence>
<evidence type="ECO:0007744" key="19">
    <source>
        <dbReference type="PDB" id="1H47"/>
    </source>
</evidence>
<evidence type="ECO:0007744" key="20">
    <source>
        <dbReference type="PDB" id="1H48"/>
    </source>
</evidence>
<evidence type="ECO:0007744" key="21">
    <source>
        <dbReference type="PDB" id="1JY8"/>
    </source>
</evidence>
<evidence type="ECO:0007744" key="22">
    <source>
        <dbReference type="PDB" id="1KNJ"/>
    </source>
</evidence>
<evidence type="ECO:0007744" key="23">
    <source>
        <dbReference type="PDB" id="1KNK"/>
    </source>
</evidence>
<evidence type="ECO:0007744" key="24">
    <source>
        <dbReference type="PDB" id="1U3L"/>
    </source>
</evidence>
<evidence type="ECO:0007744" key="25">
    <source>
        <dbReference type="PDB" id="1U3P"/>
    </source>
</evidence>
<evidence type="ECO:0007744" key="26">
    <source>
        <dbReference type="PDB" id="1U40"/>
    </source>
</evidence>
<evidence type="ECO:0007744" key="27">
    <source>
        <dbReference type="PDB" id="1U43"/>
    </source>
</evidence>
<evidence type="ECO:0007744" key="28">
    <source>
        <dbReference type="PDB" id="1YQN"/>
    </source>
</evidence>
<evidence type="ECO:0007744" key="29">
    <source>
        <dbReference type="PDB" id="2AMT"/>
    </source>
</evidence>
<evidence type="ECO:0007744" key="30">
    <source>
        <dbReference type="PDB" id="2GZL"/>
    </source>
</evidence>
<evidence type="ECO:0007744" key="31">
    <source>
        <dbReference type="PDB" id="3ELC"/>
    </source>
</evidence>
<evidence type="ECO:0007744" key="32">
    <source>
        <dbReference type="PDB" id="3EOR"/>
    </source>
</evidence>
<evidence type="ECO:0007744" key="33">
    <source>
        <dbReference type="PDB" id="3ERN"/>
    </source>
</evidence>
<evidence type="ECO:0007744" key="34">
    <source>
        <dbReference type="PDB" id="3ESJ"/>
    </source>
</evidence>
<evidence type="ECO:0007744" key="35">
    <source>
        <dbReference type="PDB" id="3FBA"/>
    </source>
</evidence>
<evidence type="ECO:0007829" key="36">
    <source>
        <dbReference type="PDB" id="1GX1"/>
    </source>
</evidence>
<evidence type="ECO:0007829" key="37">
    <source>
        <dbReference type="PDB" id="1U43"/>
    </source>
</evidence>
<evidence type="ECO:0007829" key="38">
    <source>
        <dbReference type="PDB" id="2GZL"/>
    </source>
</evidence>
<accession>P62617</accession>
<accession>P36663</accession>
<accession>Q2MA83</accession>
<name>ISPF_ECOLI</name>
<gene>
    <name evidence="1" type="primary">ispF</name>
    <name type="synonym">mecS</name>
    <name type="synonym">ygbB</name>
    <name type="ordered locus">b2746</name>
    <name type="ordered locus">JW2716</name>
</gene>
<reference key="1">
    <citation type="journal article" date="1994" name="J. Bacteriol.">
        <title>A new gene involved in stationary-phase survival located at 59 minutes on the Escherichia coli chromosome.</title>
        <authorList>
            <person name="Li C."/>
            <person name="Ichikawa J.K."/>
            <person name="Ravetto J.J."/>
            <person name="Kuo H.-C."/>
            <person name="Fu J.C."/>
            <person name="Clarke S."/>
        </authorList>
    </citation>
    <scope>NUCLEOTIDE SEQUENCE [GENOMIC DNA]</scope>
    <source>
        <strain>MP180</strain>
    </source>
</reference>
<reference key="2">
    <citation type="journal article" date="2000" name="Proc. Natl. Acad. Sci. U.S.A.">
        <title>Biosynthesis of terpenoids: YgbB protein converts 4-diphosphocytidyl-2C-methyl-D-erythritol 2-phosphate to 2C-methyl-D-erythritol 2,4-cyclodiphosphate.</title>
        <authorList>
            <person name="Herz S."/>
            <person name="Wungsintaweekul J."/>
            <person name="Schuhr C.A."/>
            <person name="Hecht S."/>
            <person name="Luettgen H."/>
            <person name="Sagner S."/>
            <person name="Fellermeier M."/>
            <person name="Eisenreich W."/>
            <person name="Zenk M.H."/>
            <person name="Bacher A."/>
            <person name="Rohdich F."/>
        </authorList>
    </citation>
    <scope>NUCLEOTIDE SEQUENCE [GENOMIC DNA]</scope>
    <scope>PARTIAL PROTEIN SEQUENCE</scope>
    <scope>FUNCTION AS AN MECDP-SYNTHASE</scope>
    <scope>CATALYTIC ACTIVITY</scope>
    <scope>SUBSTRATE SPECIFICITY</scope>
    <scope>COFACTOR</scope>
</reference>
<reference key="3">
    <citation type="journal article" date="2000" name="Tetrahedron Lett.">
        <title>Studies on the nonmevalonate pathway: formation of 2-C-methyl-D-erythritol 2,4-cyclodiphosphate from 2-phospho-4-(cytidine 5'-diphospho)-2-C-methyl-D-erythritol.</title>
        <authorList>
            <person name="Takagi M."/>
            <person name="Kuzuyama T."/>
            <person name="Kaneda K."/>
            <person name="Watanabe H."/>
            <person name="Dairi T."/>
            <person name="Seto H."/>
        </authorList>
    </citation>
    <scope>NUCLEOTIDE SEQUENCE [GENOMIC DNA]</scope>
    <scope>CHARACTERIZATION</scope>
</reference>
<reference key="4">
    <citation type="journal article" date="1997" name="Science">
        <title>The complete genome sequence of Escherichia coli K-12.</title>
        <authorList>
            <person name="Blattner F.R."/>
            <person name="Plunkett G. III"/>
            <person name="Bloch C.A."/>
            <person name="Perna N.T."/>
            <person name="Burland V."/>
            <person name="Riley M."/>
            <person name="Collado-Vides J."/>
            <person name="Glasner J.D."/>
            <person name="Rode C.K."/>
            <person name="Mayhew G.F."/>
            <person name="Gregor J."/>
            <person name="Davis N.W."/>
            <person name="Kirkpatrick H.A."/>
            <person name="Goeden M.A."/>
            <person name="Rose D.J."/>
            <person name="Mau B."/>
            <person name="Shao Y."/>
        </authorList>
    </citation>
    <scope>NUCLEOTIDE SEQUENCE [LARGE SCALE GENOMIC DNA]</scope>
    <source>
        <strain>K12 / MG1655 / ATCC 47076</strain>
    </source>
</reference>
<reference key="5">
    <citation type="journal article" date="2006" name="Mol. Syst. Biol.">
        <title>Highly accurate genome sequences of Escherichia coli K-12 strains MG1655 and W3110.</title>
        <authorList>
            <person name="Hayashi K."/>
            <person name="Morooka N."/>
            <person name="Yamamoto Y."/>
            <person name="Fujita K."/>
            <person name="Isono K."/>
            <person name="Choi S."/>
            <person name="Ohtsubo E."/>
            <person name="Baba T."/>
            <person name="Wanner B.L."/>
            <person name="Mori H."/>
            <person name="Horiuchi T."/>
        </authorList>
    </citation>
    <scope>NUCLEOTIDE SEQUENCE [LARGE SCALE GENOMIC DNA]</scope>
    <source>
        <strain>K12 / W3110 / ATCC 27325 / DSM 5911</strain>
    </source>
</reference>
<reference key="6">
    <citation type="journal article" date="1999" name="Electrophoresis">
        <title>Enrichment of low abundance proteins of Escherichia coli by hydroxyapatite chromatography.</title>
        <authorList>
            <person name="Fountoulakis M."/>
            <person name="Takacs M.-F."/>
            <person name="Berndt P."/>
            <person name="Langen H."/>
            <person name="Takacs B."/>
        </authorList>
    </citation>
    <scope>IDENTIFICATION BY MASS SPECTROMETRY</scope>
    <source>
        <strain>B / BL21</strain>
    </source>
</reference>
<reference key="7">
    <citation type="journal article" date="2002" name="J. Bacteriol.">
        <title>Characterization of the depletion of 2-C-methyl-D-erythritol-2,4-cyclodiphosphate synthase in Escherichia coli and Bacillus subtilis.</title>
        <authorList>
            <person name="Campbell T.L."/>
            <person name="Brown E.D."/>
        </authorList>
    </citation>
    <scope>DISRUPTION PHENOTYPE</scope>
</reference>
<reference key="8">
    <citation type="journal article" date="2012" name="ACS Chem. Biol.">
        <title>2C-Methyl-d-erythritol 4-phosphate enhances and sustains cyclodiphosphate synthase IspF activity.</title>
        <authorList>
            <person name="Bitok J.K."/>
            <person name="Meyers C.F."/>
        </authorList>
    </citation>
    <scope>FUNCTION AS AN MECDP-SYNTHASE</scope>
    <scope>CATALYTIC ACTIVITY</scope>
    <scope>ACTIVITY REGULATION</scope>
    <scope>SUBSTRATE SPECIFICITY</scope>
    <scope>BIOPHYSICOCHEMICAL PROPERTIES</scope>
</reference>
<reference evidence="22 23" key="9">
    <citation type="journal article" date="2002" name="J. Biol. Chem.">
        <title>Structure and mechanism of 2-C-methyl-D-erythritol 2,4-cyclodiphosphate synthase. An enzyme in the mevalonate-independent isoprenoid biosynthetic pathway.</title>
        <authorList>
            <person name="Richard S.B."/>
            <person name="Ferrer J.-L."/>
            <person name="Bowman M.E."/>
            <person name="Lillo A.M."/>
            <person name="Tetzlaff C.N."/>
            <person name="Cane D.E."/>
            <person name="Noel J.P."/>
        </authorList>
    </citation>
    <scope>X-RAY CRYSTALLOGRAPHY (2.8 ANGSTROMS) IN COMPLEX WITH SUBSTRATE ANALOGS AND DIVALENT CATIONS</scope>
    <scope>COFACTOR</scope>
    <scope>SUBUNIT</scope>
    <source>
        <strain>K12</strain>
    </source>
</reference>
<reference evidence="21 24 25 26 27" key="10">
    <citation type="journal article" date="2002" name="J. Mol. Biol.">
        <title>Structure of 2C-methyl-D-erythritol-2,4-cyclodiphosphate synthase involved in mevalonate-independent biosynthesis of isoprenoids.</title>
        <authorList>
            <person name="Steinbacher S."/>
            <person name="Kaiser J."/>
            <person name="Wungsintaweekul J."/>
            <person name="Hecht S."/>
            <person name="Eisenreich W."/>
            <person name="Gerhardt S."/>
            <person name="Bacher A."/>
            <person name="Rohdich F."/>
        </authorList>
    </citation>
    <scope>X-RAY CRYSTALLOGRAPHY (2.5 ANGSTROMS) IN COMPLEX WITH SUBSTRATE ANALOGS AND DIVALENT CATIONS</scope>
    <scope>MUTAGENESIS OF ASP-8; HIS-42 AND ASP-56</scope>
    <scope>COFACTOR</scope>
    <scope>SUBUNIT</scope>
</reference>
<reference evidence="18" key="11">
    <citation type="journal article" date="2002" name="Proc. Natl. Acad. Sci. U.S.A.">
        <title>Structure of 2C-methyl-D-erythritol 2,4-cyclodiphosphate synthase: an essential enzyme for isoprenoid biosynthesis and target for antimicrobial drug development.</title>
        <authorList>
            <person name="Kemp L.E."/>
            <person name="Bond C.S."/>
            <person name="Hunter W.N."/>
        </authorList>
    </citation>
    <scope>X-RAY CRYSTALLOGRAPHY (1.8 ANGSTROMS) IN COMPLEX WITH SUBSTRATE ANALOGS AND DIVALENT CATIONS</scope>
    <scope>COFACTOR</scope>
    <scope>SUBUNIT</scope>
</reference>
<reference evidence="19 20" key="12">
    <citation type="journal article" date="2005" name="Acta Crystallogr. D">
        <title>The identification of isoprenoids that bind in the intersubunit cavity of Escherichia coli 2C-methyl-D-erythritol-2,4-cyclodiphosphate synthase by complementary biophysical methods.</title>
        <authorList>
            <person name="Kemp L.E."/>
            <person name="Alphey M.S."/>
            <person name="Bond C.S."/>
            <person name="Ferguson M.A."/>
            <person name="Hecht S."/>
            <person name="Bacher A."/>
            <person name="Eisenreich W."/>
            <person name="Rohdich F."/>
            <person name="Hunter W.N."/>
        </authorList>
    </citation>
    <scope>X-RAY CRYSTALLOGRAPHY (2.0 ANGSTROMS) IN COMPLEX WITH SUBSTRATE ANALOGS AND DIVALENT CATIONS</scope>
    <scope>COFACTOR</scope>
    <scope>SUBUNIT</scope>
</reference>
<reference evidence="28" key="13">
    <citation type="journal article" date="2005" name="Acta Crystallogr. F">
        <title>A double mutation of Escherichia coli2C-methyl-D-erythritol-2,4-cyclodiphosphate synthase disrupts six hydrogen bonds with, yet fails to prevent binding of, an isoprenoid diphosphate.</title>
        <authorList>
            <person name="Sgraja T."/>
            <person name="Kemp L.E."/>
            <person name="Ramsden N."/>
            <person name="Hunter W.N."/>
        </authorList>
    </citation>
    <scope>X-RAY CRYSTALLOGRAPHY (3.11 ANGSTROMS) OF DOUBLE MUTANT MET-142/LEU-144 IN COMPLEX WITH SUBSTRATE ANALOGS AND DIVALENT CATIONS</scope>
    <scope>MUTAGENESIS OF ARG-142 AND GLU-144</scope>
    <scope>COFACTOR</scope>
</reference>
<reference evidence="29 30" key="14">
    <citation type="journal article" date="2006" name="Angew. Chem. Int. Ed.">
        <title>Fluorescent inhibitors for IspF, an enzyme in the non-mevalonate pathway for isoprenoid biosynthesis and a potential target for antimalarial therapy.</title>
        <authorList>
            <person name="Crane C.M."/>
            <person name="Kaiser J."/>
            <person name="Ramsden N.L."/>
            <person name="Lauw S."/>
            <person name="Rohdich F."/>
            <person name="Eisenreich W."/>
            <person name="Hunter W.N."/>
            <person name="Bacher A."/>
            <person name="Diederich F."/>
        </authorList>
    </citation>
    <scope>X-RAY CRYSTALLOGRAPHY (2.3 ANGSTROMS) IN COMPLEX WITH SUBSTRATE ANALOGS AND ZINC IONS</scope>
    <scope>COFACTOR</scope>
    <scope>SUBUNIT</scope>
</reference>
<reference evidence="31 32 33 34 35" key="15">
    <citation type="journal article" date="2009" name="J. Med. Chem.">
        <title>A structure-based approach to ligand discovery for 2C-methyl-D-erythritol-2,4-cyclodiphosphate synthase: a target for antimicrobial therapy.</title>
        <authorList>
            <person name="Ramsden N.L."/>
            <person name="Buetow L."/>
            <person name="Dawson A."/>
            <person name="Kemp L.A."/>
            <person name="Ulaganathan V."/>
            <person name="Brenk R."/>
            <person name="Klebe G."/>
            <person name="Hunter W.N."/>
        </authorList>
    </citation>
    <scope>X-RAY CRYSTALLOGRAPHY (2.5 ANGSTROMS) IN COMPLEX WITH SUBSTRATE ANALOGS AND ZINC IONS</scope>
    <scope>COFACTOR</scope>
    <scope>SUBUNIT</scope>
</reference>
<comment type="function">
    <text evidence="2 11">Involved in the biosynthesis of isopentenyl diphosphate (IPP) and dimethylallyl diphosphate (DMAPP), two major building blocks of isoprenoid compounds. Catalyzes the conversion of 4-diphosphocytidyl-2-C-methyl-D-erythritol 2-phosphate (CDP-ME2P) to 2-C-methyl-D-erythritol 2,4-cyclodiphosphate (ME-CPP) with a corresponding release of cytidine 5-monophosphate (CMP). Also converts 4-diphosphocytidyl-2-C-methyl-D-erythritol into 2-C-methyl-D-erythritol 3,4-cyclophosphate and CMP.</text>
</comment>
<comment type="catalytic activity">
    <reaction evidence="1 2 11">
        <text>4-CDP-2-C-methyl-D-erythritol 2-phosphate = 2-C-methyl-D-erythritol 2,4-cyclic diphosphate + CMP</text>
        <dbReference type="Rhea" id="RHEA:23864"/>
        <dbReference type="ChEBI" id="CHEBI:57919"/>
        <dbReference type="ChEBI" id="CHEBI:58483"/>
        <dbReference type="ChEBI" id="CHEBI:60377"/>
        <dbReference type="EC" id="4.6.1.12"/>
    </reaction>
</comment>
<comment type="catalytic activity">
    <reaction evidence="2">
        <text>4-CDP-2-C-methyl-D-erythritol = 2-C-methyl-D-erythritol 3,4-cyclophosphate + CMP + H(+)</text>
        <dbReference type="Rhea" id="RHEA:68364"/>
        <dbReference type="ChEBI" id="CHEBI:15378"/>
        <dbReference type="ChEBI" id="CHEBI:57823"/>
        <dbReference type="ChEBI" id="CHEBI:60377"/>
        <dbReference type="ChEBI" id="CHEBI:177365"/>
    </reaction>
</comment>
<comment type="cofactor">
    <cofactor evidence="1 2 3 4 5 7 8 9 10">
        <name>a divalent metal cation</name>
        <dbReference type="ChEBI" id="CHEBI:60240"/>
    </cofactor>
    <text evidence="1 2 3 4 5 7 8 9 10">Binds 1 divalent metal cation per subunit.</text>
</comment>
<comment type="activity regulation">
    <text evidence="11">Activated by 2C-methyl-D-erythritol 4-phosphate (MEP).</text>
</comment>
<comment type="biophysicochemical properties">
    <kinetics>
        <KM evidence="11">339 uM for CDP-ME2P (at pH 7.4)</KM>
        <text>kcat is 61 min(-1) for CDP-ME2P (at pH 7.4).</text>
    </kinetics>
</comment>
<comment type="pathway">
    <text evidence="1">Isoprenoid biosynthesis; isopentenyl diphosphate biosynthesis via DXP pathway; isopentenyl diphosphate from 1-deoxy-D-xylulose 5-phosphate: step 4/6.</text>
</comment>
<comment type="subunit">
    <text evidence="1 3 4 5 7 8 9 10">Homotrimer.</text>
</comment>
<comment type="interaction">
    <interactant intactId="EBI-562321">
        <id>P62617</id>
    </interactant>
    <interactant intactId="EBI-543760">
        <id>P67910</id>
        <label>hldD</label>
    </interactant>
    <organismsDiffer>false</organismsDiffer>
    <experiments>2</experiments>
</comment>
<comment type="disruption phenotype">
    <text evidence="6">Cells lacking this gene reveal a filamentous phenotype.</text>
</comment>
<comment type="similarity">
    <text evidence="1 12">Belongs to the IspF family.</text>
</comment>
<sequence>MRIGHGFDVHAFGGEGPIIIGGVRIPYEKGLLAHSDGDVALHALTDALLGAAALGDIGKLFPDTDPAFKGADSRELLREAWRRIQAKGYTLGNVDVTIIAQAPKMLPHIPQMRVFIAEDLGCHMDDVNVKATTTEKLGFTGRGEGIACEAVALLIKATK</sequence>
<proteinExistence type="evidence at protein level"/>
<protein>
    <recommendedName>
        <fullName evidence="1">2-C-methyl-D-erythritol 2,4-cyclodiphosphate synthase</fullName>
        <shortName evidence="1">MECDP-synthase</shortName>
        <shortName evidence="1">MECPP-synthase</shortName>
        <shortName evidence="1">MECPS</shortName>
        <ecNumber evidence="1 2 11">4.6.1.12</ecNumber>
    </recommendedName>
</protein>